<feature type="chain" id="PRO_0000239258" description="Glucose and ribitol dehydrogenase homolog 2">
    <location>
        <begin position="1"/>
        <end position="289"/>
    </location>
</feature>
<feature type="region of interest" description="Disordered" evidence="3">
    <location>
        <begin position="1"/>
        <end position="32"/>
    </location>
</feature>
<feature type="active site" description="Proton acceptor" evidence="2">
    <location>
        <position position="193"/>
    </location>
</feature>
<feature type="binding site" evidence="1">
    <location>
        <begin position="43"/>
        <end position="67"/>
    </location>
    <ligand>
        <name>NAD(+)</name>
        <dbReference type="ChEBI" id="CHEBI:57540"/>
    </ligand>
</feature>
<feature type="binding site" evidence="1">
    <location>
        <position position="180"/>
    </location>
    <ligand>
        <name>substrate</name>
    </ligand>
</feature>
<feature type="sequence conflict" description="In Ref. 3; AAL16204." evidence="4" ref="3">
    <original>A</original>
    <variation>P</variation>
    <location>
        <position position="2"/>
    </location>
</feature>
<evidence type="ECO:0000250" key="1"/>
<evidence type="ECO:0000255" key="2">
    <source>
        <dbReference type="PROSITE-ProRule" id="PRU10001"/>
    </source>
</evidence>
<evidence type="ECO:0000256" key="3">
    <source>
        <dbReference type="SAM" id="MobiDB-lite"/>
    </source>
</evidence>
<evidence type="ECO:0000305" key="4"/>
<reference key="1">
    <citation type="journal article" date="2000" name="Nature">
        <title>Sequence and analysis of chromosome 3 of the plant Arabidopsis thaliana.</title>
        <authorList>
            <person name="Salanoubat M."/>
            <person name="Lemcke K."/>
            <person name="Rieger M."/>
            <person name="Ansorge W."/>
            <person name="Unseld M."/>
            <person name="Fartmann B."/>
            <person name="Valle G."/>
            <person name="Bloecker H."/>
            <person name="Perez-Alonso M."/>
            <person name="Obermaier B."/>
            <person name="Delseny M."/>
            <person name="Boutry M."/>
            <person name="Grivell L.A."/>
            <person name="Mache R."/>
            <person name="Puigdomenech P."/>
            <person name="De Simone V."/>
            <person name="Choisne N."/>
            <person name="Artiguenave F."/>
            <person name="Robert C."/>
            <person name="Brottier P."/>
            <person name="Wincker P."/>
            <person name="Cattolico L."/>
            <person name="Weissenbach J."/>
            <person name="Saurin W."/>
            <person name="Quetier F."/>
            <person name="Schaefer M."/>
            <person name="Mueller-Auer S."/>
            <person name="Gabel C."/>
            <person name="Fuchs M."/>
            <person name="Benes V."/>
            <person name="Wurmbach E."/>
            <person name="Drzonek H."/>
            <person name="Erfle H."/>
            <person name="Jordan N."/>
            <person name="Bangert S."/>
            <person name="Wiedelmann R."/>
            <person name="Kranz H."/>
            <person name="Voss H."/>
            <person name="Holland R."/>
            <person name="Brandt P."/>
            <person name="Nyakatura G."/>
            <person name="Vezzi A."/>
            <person name="D'Angelo M."/>
            <person name="Pallavicini A."/>
            <person name="Toppo S."/>
            <person name="Simionati B."/>
            <person name="Conrad A."/>
            <person name="Hornischer K."/>
            <person name="Kauer G."/>
            <person name="Loehnert T.-H."/>
            <person name="Nordsiek G."/>
            <person name="Reichelt J."/>
            <person name="Scharfe M."/>
            <person name="Schoen O."/>
            <person name="Bargues M."/>
            <person name="Terol J."/>
            <person name="Climent J."/>
            <person name="Navarro P."/>
            <person name="Collado C."/>
            <person name="Perez-Perez A."/>
            <person name="Ottenwaelder B."/>
            <person name="Duchemin D."/>
            <person name="Cooke R."/>
            <person name="Laudie M."/>
            <person name="Berger-Llauro C."/>
            <person name="Purnelle B."/>
            <person name="Masuy D."/>
            <person name="de Haan M."/>
            <person name="Maarse A.C."/>
            <person name="Alcaraz J.-P."/>
            <person name="Cottet A."/>
            <person name="Casacuberta E."/>
            <person name="Monfort A."/>
            <person name="Argiriou A."/>
            <person name="Flores M."/>
            <person name="Liguori R."/>
            <person name="Vitale D."/>
            <person name="Mannhaupt G."/>
            <person name="Haase D."/>
            <person name="Schoof H."/>
            <person name="Rudd S."/>
            <person name="Zaccaria P."/>
            <person name="Mewes H.-W."/>
            <person name="Mayer K.F.X."/>
            <person name="Kaul S."/>
            <person name="Town C.D."/>
            <person name="Koo H.L."/>
            <person name="Tallon L.J."/>
            <person name="Jenkins J."/>
            <person name="Rooney T."/>
            <person name="Rizzo M."/>
            <person name="Walts A."/>
            <person name="Utterback T."/>
            <person name="Fujii C.Y."/>
            <person name="Shea T.P."/>
            <person name="Creasy T.H."/>
            <person name="Haas B."/>
            <person name="Maiti R."/>
            <person name="Wu D."/>
            <person name="Peterson J."/>
            <person name="Van Aken S."/>
            <person name="Pai G."/>
            <person name="Militscher J."/>
            <person name="Sellers P."/>
            <person name="Gill J.E."/>
            <person name="Feldblyum T.V."/>
            <person name="Preuss D."/>
            <person name="Lin X."/>
            <person name="Nierman W.C."/>
            <person name="Salzberg S.L."/>
            <person name="White O."/>
            <person name="Venter J.C."/>
            <person name="Fraser C.M."/>
            <person name="Kaneko T."/>
            <person name="Nakamura Y."/>
            <person name="Sato S."/>
            <person name="Kato T."/>
            <person name="Asamizu E."/>
            <person name="Sasamoto S."/>
            <person name="Kimura T."/>
            <person name="Idesawa K."/>
            <person name="Kawashima K."/>
            <person name="Kishida Y."/>
            <person name="Kiyokawa C."/>
            <person name="Kohara M."/>
            <person name="Matsumoto M."/>
            <person name="Matsuno A."/>
            <person name="Muraki A."/>
            <person name="Nakayama S."/>
            <person name="Nakazaki N."/>
            <person name="Shinpo S."/>
            <person name="Takeuchi C."/>
            <person name="Wada T."/>
            <person name="Watanabe A."/>
            <person name="Yamada M."/>
            <person name="Yasuda M."/>
            <person name="Tabata S."/>
        </authorList>
    </citation>
    <scope>NUCLEOTIDE SEQUENCE [LARGE SCALE GENOMIC DNA]</scope>
    <source>
        <strain>cv. Columbia</strain>
    </source>
</reference>
<reference key="2">
    <citation type="journal article" date="2017" name="Plant J.">
        <title>Araport11: a complete reannotation of the Arabidopsis thaliana reference genome.</title>
        <authorList>
            <person name="Cheng C.Y."/>
            <person name="Krishnakumar V."/>
            <person name="Chan A.P."/>
            <person name="Thibaud-Nissen F."/>
            <person name="Schobel S."/>
            <person name="Town C.D."/>
        </authorList>
    </citation>
    <scope>GENOME REANNOTATION</scope>
    <source>
        <strain>cv. Columbia</strain>
    </source>
</reference>
<reference key="3">
    <citation type="journal article" date="2003" name="Science">
        <title>Empirical analysis of transcriptional activity in the Arabidopsis genome.</title>
        <authorList>
            <person name="Yamada K."/>
            <person name="Lim J."/>
            <person name="Dale J.M."/>
            <person name="Chen H."/>
            <person name="Shinn P."/>
            <person name="Palm C.J."/>
            <person name="Southwick A.M."/>
            <person name="Wu H.C."/>
            <person name="Kim C.J."/>
            <person name="Nguyen M."/>
            <person name="Pham P.K."/>
            <person name="Cheuk R.F."/>
            <person name="Karlin-Newmann G."/>
            <person name="Liu S.X."/>
            <person name="Lam B."/>
            <person name="Sakano H."/>
            <person name="Wu T."/>
            <person name="Yu G."/>
            <person name="Miranda M."/>
            <person name="Quach H.L."/>
            <person name="Tripp M."/>
            <person name="Chang C.H."/>
            <person name="Lee J.M."/>
            <person name="Toriumi M.J."/>
            <person name="Chan M.M."/>
            <person name="Tang C.C."/>
            <person name="Onodera C.S."/>
            <person name="Deng J.M."/>
            <person name="Akiyama K."/>
            <person name="Ansari Y."/>
            <person name="Arakawa T."/>
            <person name="Banh J."/>
            <person name="Banno F."/>
            <person name="Bowser L."/>
            <person name="Brooks S.Y."/>
            <person name="Carninci P."/>
            <person name="Chao Q."/>
            <person name="Choy N."/>
            <person name="Enju A."/>
            <person name="Goldsmith A.D."/>
            <person name="Gurjal M."/>
            <person name="Hansen N.F."/>
            <person name="Hayashizaki Y."/>
            <person name="Johnson-Hopson C."/>
            <person name="Hsuan V.W."/>
            <person name="Iida K."/>
            <person name="Karnes M."/>
            <person name="Khan S."/>
            <person name="Koesema E."/>
            <person name="Ishida J."/>
            <person name="Jiang P.X."/>
            <person name="Jones T."/>
            <person name="Kawai J."/>
            <person name="Kamiya A."/>
            <person name="Meyers C."/>
            <person name="Nakajima M."/>
            <person name="Narusaka M."/>
            <person name="Seki M."/>
            <person name="Sakurai T."/>
            <person name="Satou M."/>
            <person name="Tamse R."/>
            <person name="Vaysberg M."/>
            <person name="Wallender E.K."/>
            <person name="Wong C."/>
            <person name="Yamamura Y."/>
            <person name="Yuan S."/>
            <person name="Shinozaki K."/>
            <person name="Davis R.W."/>
            <person name="Theologis A."/>
            <person name="Ecker J.R."/>
        </authorList>
    </citation>
    <scope>NUCLEOTIDE SEQUENCE [LARGE SCALE MRNA]</scope>
    <source>
        <strain>cv. Columbia</strain>
    </source>
</reference>
<proteinExistence type="evidence at transcript level"/>
<sequence length="289" mass="31452">MASGFPPQKQETQPGIQHVMEPTPEFSSSNYKPSNKLHGKVALVTGGDSGIGKAVCHCYALEGASVAFTYVKGREDKDAEETLRLLHEVKTREAKEPIMIATDLGFEENCKRVVEEVVNSFGRIDVLVNCAAEQHEVSIEDIDEARLERVFRTNIFSQFFLVKYALKHMKEGSSIINTTSVVAYAGNSSLLEYTATKGAIVSFTRGLALQLAPKGIRVNGVAPGPVWTPLIPASFSEEAIKQFGSETPMKRAAQPVEVAPSYVFLACNHCSSYYTGQILHPNGGLIVNA</sequence>
<protein>
    <recommendedName>
        <fullName>Glucose and ribitol dehydrogenase homolog 2</fullName>
        <ecNumber>1.1.1.-</ecNumber>
    </recommendedName>
</protein>
<name>GRDH2_ARATH</name>
<gene>
    <name type="ordered locus">At3g05260</name>
    <name type="ORF">T12H1.23</name>
</gene>
<comment type="function">
    <text evidence="1">May act as a short alcohol-polyol-sugar dehydrogenase possibly related to carbohydrate metabolism and the acquisition of desiccation tolerance. May also be involved in signal transduction (By similarity).</text>
</comment>
<comment type="similarity">
    <text evidence="4">Belongs to the short-chain dehydrogenases/reductases (SDR) family.</text>
</comment>
<organism>
    <name type="scientific">Arabidopsis thaliana</name>
    <name type="common">Mouse-ear cress</name>
    <dbReference type="NCBI Taxonomy" id="3702"/>
    <lineage>
        <taxon>Eukaryota</taxon>
        <taxon>Viridiplantae</taxon>
        <taxon>Streptophyta</taxon>
        <taxon>Embryophyta</taxon>
        <taxon>Tracheophyta</taxon>
        <taxon>Spermatophyta</taxon>
        <taxon>Magnoliopsida</taxon>
        <taxon>eudicotyledons</taxon>
        <taxon>Gunneridae</taxon>
        <taxon>Pentapetalae</taxon>
        <taxon>rosids</taxon>
        <taxon>malvids</taxon>
        <taxon>Brassicales</taxon>
        <taxon>Brassicaceae</taxon>
        <taxon>Camelineae</taxon>
        <taxon>Arabidopsis</taxon>
    </lineage>
</organism>
<keyword id="KW-0560">Oxidoreductase</keyword>
<keyword id="KW-1185">Reference proteome</keyword>
<dbReference type="EC" id="1.1.1.-"/>
<dbReference type="EMBL" id="AC009177">
    <property type="protein sequence ID" value="AAF27032.1"/>
    <property type="molecule type" value="Genomic_DNA"/>
</dbReference>
<dbReference type="EMBL" id="CP002686">
    <property type="protein sequence ID" value="AEE74212.1"/>
    <property type="molecule type" value="Genomic_DNA"/>
</dbReference>
<dbReference type="EMBL" id="AF428435">
    <property type="protein sequence ID" value="AAL16204.1"/>
    <property type="molecule type" value="mRNA"/>
</dbReference>
<dbReference type="RefSeq" id="NP_187177.1">
    <property type="nucleotide sequence ID" value="NM_111399.5"/>
</dbReference>
<dbReference type="SMR" id="Q9MA93"/>
<dbReference type="FunCoup" id="Q9MA93">
    <property type="interactions" value="36"/>
</dbReference>
<dbReference type="STRING" id="3702.Q9MA93"/>
<dbReference type="PaxDb" id="3702-AT3G05260.1"/>
<dbReference type="ProteomicsDB" id="222353"/>
<dbReference type="EnsemblPlants" id="AT3G05260.1">
    <property type="protein sequence ID" value="AT3G05260.1"/>
    <property type="gene ID" value="AT3G05260"/>
</dbReference>
<dbReference type="GeneID" id="819690"/>
<dbReference type="Gramene" id="AT3G05260.1">
    <property type="protein sequence ID" value="AT3G05260.1"/>
    <property type="gene ID" value="AT3G05260"/>
</dbReference>
<dbReference type="KEGG" id="ath:AT3G05260"/>
<dbReference type="Araport" id="AT3G05260"/>
<dbReference type="TAIR" id="AT3G05260"/>
<dbReference type="eggNOG" id="KOG0725">
    <property type="taxonomic scope" value="Eukaryota"/>
</dbReference>
<dbReference type="HOGENOM" id="CLU_010194_4_1_1"/>
<dbReference type="InParanoid" id="Q9MA93"/>
<dbReference type="OMA" id="YGYFHMA"/>
<dbReference type="OrthoDB" id="47007at2759"/>
<dbReference type="PhylomeDB" id="Q9MA93"/>
<dbReference type="BioCyc" id="ARA:AT3G05260-MONOMER"/>
<dbReference type="PRO" id="PR:Q9MA93"/>
<dbReference type="Proteomes" id="UP000006548">
    <property type="component" value="Chromosome 3"/>
</dbReference>
<dbReference type="ExpressionAtlas" id="Q9MA93">
    <property type="expression patterns" value="baseline and differential"/>
</dbReference>
<dbReference type="GO" id="GO:0016614">
    <property type="term" value="F:oxidoreductase activity, acting on CH-OH group of donors"/>
    <property type="evidence" value="ECO:0007669"/>
    <property type="project" value="UniProtKB-ARBA"/>
</dbReference>
<dbReference type="CDD" id="cd05355">
    <property type="entry name" value="SDR_c1"/>
    <property type="match status" value="1"/>
</dbReference>
<dbReference type="FunFam" id="3.40.50.720:FF:000084">
    <property type="entry name" value="Short-chain dehydrogenase reductase"/>
    <property type="match status" value="1"/>
</dbReference>
<dbReference type="Gene3D" id="3.40.50.720">
    <property type="entry name" value="NAD(P)-binding Rossmann-like Domain"/>
    <property type="match status" value="1"/>
</dbReference>
<dbReference type="InterPro" id="IPR036291">
    <property type="entry name" value="NAD(P)-bd_dom_sf"/>
</dbReference>
<dbReference type="InterPro" id="IPR020904">
    <property type="entry name" value="Sc_DH/Rdtase_CS"/>
</dbReference>
<dbReference type="InterPro" id="IPR002347">
    <property type="entry name" value="SDR_fam"/>
</dbReference>
<dbReference type="PANTHER" id="PTHR48107:SF6">
    <property type="entry name" value="GLUCOSE AND RIBITOL DEHYDROGENASE HOMOLOG 2"/>
    <property type="match status" value="1"/>
</dbReference>
<dbReference type="PANTHER" id="PTHR48107">
    <property type="entry name" value="NADPH-DEPENDENT ALDEHYDE REDUCTASE-LIKE PROTEIN, CHLOROPLASTIC-RELATED"/>
    <property type="match status" value="1"/>
</dbReference>
<dbReference type="Pfam" id="PF13561">
    <property type="entry name" value="adh_short_C2"/>
    <property type="match status" value="1"/>
</dbReference>
<dbReference type="PRINTS" id="PR00081">
    <property type="entry name" value="GDHRDH"/>
</dbReference>
<dbReference type="PRINTS" id="PR00080">
    <property type="entry name" value="SDRFAMILY"/>
</dbReference>
<dbReference type="SMART" id="SM00822">
    <property type="entry name" value="PKS_KR"/>
    <property type="match status" value="1"/>
</dbReference>
<dbReference type="SUPFAM" id="SSF51735">
    <property type="entry name" value="NAD(P)-binding Rossmann-fold domains"/>
    <property type="match status" value="1"/>
</dbReference>
<dbReference type="PROSITE" id="PS00061">
    <property type="entry name" value="ADH_SHORT"/>
    <property type="match status" value="1"/>
</dbReference>
<accession>Q9MA93</accession>
<accession>Q944H4</accession>